<keyword id="KW-0030">Aminoacyl-tRNA synthetase</keyword>
<keyword id="KW-0067">ATP-binding</keyword>
<keyword id="KW-0175">Coiled coil</keyword>
<keyword id="KW-0963">Cytoplasm</keyword>
<keyword id="KW-0436">Ligase</keyword>
<keyword id="KW-0547">Nucleotide-binding</keyword>
<keyword id="KW-0648">Protein biosynthesis</keyword>
<keyword id="KW-1185">Reference proteome</keyword>
<evidence type="ECO:0000255" key="1">
    <source>
        <dbReference type="HAMAP-Rule" id="MF_02004"/>
    </source>
</evidence>
<reference key="1">
    <citation type="journal article" date="2002" name="Nature">
        <title>Genome sequence of the plant pathogen Ralstonia solanacearum.</title>
        <authorList>
            <person name="Salanoubat M."/>
            <person name="Genin S."/>
            <person name="Artiguenave F."/>
            <person name="Gouzy J."/>
            <person name="Mangenot S."/>
            <person name="Arlat M."/>
            <person name="Billault A."/>
            <person name="Brottier P."/>
            <person name="Camus J.-C."/>
            <person name="Cattolico L."/>
            <person name="Chandler M."/>
            <person name="Choisne N."/>
            <person name="Claudel-Renard C."/>
            <person name="Cunnac S."/>
            <person name="Demange N."/>
            <person name="Gaspin C."/>
            <person name="Lavie M."/>
            <person name="Moisan A."/>
            <person name="Robert C."/>
            <person name="Saurin W."/>
            <person name="Schiex T."/>
            <person name="Siguier P."/>
            <person name="Thebault P."/>
            <person name="Whalen M."/>
            <person name="Wincker P."/>
            <person name="Levy M."/>
            <person name="Weissenbach J."/>
            <person name="Boucher C.A."/>
        </authorList>
    </citation>
    <scope>NUCLEOTIDE SEQUENCE [LARGE SCALE GENOMIC DNA]</scope>
    <source>
        <strain>ATCC BAA-1114 / GMI1000</strain>
    </source>
</reference>
<protein>
    <recommendedName>
        <fullName evidence="1">Valine--tRNA ligase</fullName>
        <ecNumber evidence="1">6.1.1.9</ecNumber>
    </recommendedName>
    <alternativeName>
        <fullName evidence="1">Valyl-tRNA synthetase</fullName>
        <shortName evidence="1">ValRS</shortName>
    </alternativeName>
</protein>
<proteinExistence type="inferred from homology"/>
<name>SYV_RALN1</name>
<accession>Q8XX80</accession>
<dbReference type="EC" id="6.1.1.9" evidence="1"/>
<dbReference type="EMBL" id="AL646052">
    <property type="protein sequence ID" value="CAD15943.1"/>
    <property type="molecule type" value="Genomic_DNA"/>
</dbReference>
<dbReference type="RefSeq" id="WP_011002164.1">
    <property type="nucleotide sequence ID" value="NC_003295.1"/>
</dbReference>
<dbReference type="SMR" id="Q8XX80"/>
<dbReference type="STRING" id="267608.RSc2236"/>
<dbReference type="EnsemblBacteria" id="CAD15943">
    <property type="protein sequence ID" value="CAD15943"/>
    <property type="gene ID" value="RSc2236"/>
</dbReference>
<dbReference type="KEGG" id="rso:RSc2236"/>
<dbReference type="eggNOG" id="COG0525">
    <property type="taxonomic scope" value="Bacteria"/>
</dbReference>
<dbReference type="HOGENOM" id="CLU_001493_0_2_4"/>
<dbReference type="Proteomes" id="UP000001436">
    <property type="component" value="Chromosome"/>
</dbReference>
<dbReference type="GO" id="GO:0005829">
    <property type="term" value="C:cytosol"/>
    <property type="evidence" value="ECO:0007669"/>
    <property type="project" value="TreeGrafter"/>
</dbReference>
<dbReference type="GO" id="GO:0002161">
    <property type="term" value="F:aminoacyl-tRNA deacylase activity"/>
    <property type="evidence" value="ECO:0007669"/>
    <property type="project" value="InterPro"/>
</dbReference>
<dbReference type="GO" id="GO:0005524">
    <property type="term" value="F:ATP binding"/>
    <property type="evidence" value="ECO:0007669"/>
    <property type="project" value="UniProtKB-UniRule"/>
</dbReference>
<dbReference type="GO" id="GO:0004832">
    <property type="term" value="F:valine-tRNA ligase activity"/>
    <property type="evidence" value="ECO:0007669"/>
    <property type="project" value="UniProtKB-UniRule"/>
</dbReference>
<dbReference type="GO" id="GO:0006438">
    <property type="term" value="P:valyl-tRNA aminoacylation"/>
    <property type="evidence" value="ECO:0007669"/>
    <property type="project" value="UniProtKB-UniRule"/>
</dbReference>
<dbReference type="CDD" id="cd07962">
    <property type="entry name" value="Anticodon_Ia_Val"/>
    <property type="match status" value="1"/>
</dbReference>
<dbReference type="CDD" id="cd00817">
    <property type="entry name" value="ValRS_core"/>
    <property type="match status" value="1"/>
</dbReference>
<dbReference type="FunFam" id="1.10.287.380:FF:000001">
    <property type="entry name" value="Valine--tRNA ligase"/>
    <property type="match status" value="1"/>
</dbReference>
<dbReference type="FunFam" id="3.40.50.620:FF:000032">
    <property type="entry name" value="Valine--tRNA ligase"/>
    <property type="match status" value="1"/>
</dbReference>
<dbReference type="FunFam" id="3.40.50.620:FF:000078">
    <property type="entry name" value="Valine--tRNA ligase, mitochondrial"/>
    <property type="match status" value="1"/>
</dbReference>
<dbReference type="Gene3D" id="3.40.50.620">
    <property type="entry name" value="HUPs"/>
    <property type="match status" value="2"/>
</dbReference>
<dbReference type="Gene3D" id="1.10.730.10">
    <property type="entry name" value="Isoleucyl-tRNA Synthetase, Domain 1"/>
    <property type="match status" value="1"/>
</dbReference>
<dbReference type="Gene3D" id="1.10.287.380">
    <property type="entry name" value="Valyl-tRNA synthetase, C-terminal domain"/>
    <property type="match status" value="1"/>
</dbReference>
<dbReference type="Gene3D" id="3.90.740.10">
    <property type="entry name" value="Valyl/Leucyl/Isoleucyl-tRNA synthetase, editing domain"/>
    <property type="match status" value="1"/>
</dbReference>
<dbReference type="HAMAP" id="MF_02004">
    <property type="entry name" value="Val_tRNA_synth_type1"/>
    <property type="match status" value="1"/>
</dbReference>
<dbReference type="InterPro" id="IPR001412">
    <property type="entry name" value="aa-tRNA-synth_I_CS"/>
</dbReference>
<dbReference type="InterPro" id="IPR002300">
    <property type="entry name" value="aa-tRNA-synth_Ia"/>
</dbReference>
<dbReference type="InterPro" id="IPR033705">
    <property type="entry name" value="Anticodon_Ia_Val"/>
</dbReference>
<dbReference type="InterPro" id="IPR013155">
    <property type="entry name" value="M/V/L/I-tRNA-synth_anticd-bd"/>
</dbReference>
<dbReference type="InterPro" id="IPR014729">
    <property type="entry name" value="Rossmann-like_a/b/a_fold"/>
</dbReference>
<dbReference type="InterPro" id="IPR010978">
    <property type="entry name" value="tRNA-bd_arm"/>
</dbReference>
<dbReference type="InterPro" id="IPR009080">
    <property type="entry name" value="tRNAsynth_Ia_anticodon-bd"/>
</dbReference>
<dbReference type="InterPro" id="IPR037118">
    <property type="entry name" value="Val-tRNA_synth_C_sf"/>
</dbReference>
<dbReference type="InterPro" id="IPR019499">
    <property type="entry name" value="Val-tRNA_synth_tRNA-bd"/>
</dbReference>
<dbReference type="InterPro" id="IPR009008">
    <property type="entry name" value="Val/Leu/Ile-tRNA-synth_edit"/>
</dbReference>
<dbReference type="InterPro" id="IPR002303">
    <property type="entry name" value="Valyl-tRNA_ligase"/>
</dbReference>
<dbReference type="NCBIfam" id="NF004349">
    <property type="entry name" value="PRK05729.1"/>
    <property type="match status" value="1"/>
</dbReference>
<dbReference type="NCBIfam" id="TIGR00422">
    <property type="entry name" value="valS"/>
    <property type="match status" value="1"/>
</dbReference>
<dbReference type="PANTHER" id="PTHR11946:SF93">
    <property type="entry name" value="VALINE--TRNA LIGASE, CHLOROPLASTIC_MITOCHONDRIAL 2"/>
    <property type="match status" value="1"/>
</dbReference>
<dbReference type="PANTHER" id="PTHR11946">
    <property type="entry name" value="VALYL-TRNA SYNTHETASES"/>
    <property type="match status" value="1"/>
</dbReference>
<dbReference type="Pfam" id="PF08264">
    <property type="entry name" value="Anticodon_1"/>
    <property type="match status" value="1"/>
</dbReference>
<dbReference type="Pfam" id="PF00133">
    <property type="entry name" value="tRNA-synt_1"/>
    <property type="match status" value="1"/>
</dbReference>
<dbReference type="Pfam" id="PF10458">
    <property type="entry name" value="Val_tRNA-synt_C"/>
    <property type="match status" value="1"/>
</dbReference>
<dbReference type="PRINTS" id="PR00986">
    <property type="entry name" value="TRNASYNTHVAL"/>
</dbReference>
<dbReference type="SUPFAM" id="SSF47323">
    <property type="entry name" value="Anticodon-binding domain of a subclass of class I aminoacyl-tRNA synthetases"/>
    <property type="match status" value="1"/>
</dbReference>
<dbReference type="SUPFAM" id="SSF52374">
    <property type="entry name" value="Nucleotidylyl transferase"/>
    <property type="match status" value="1"/>
</dbReference>
<dbReference type="SUPFAM" id="SSF46589">
    <property type="entry name" value="tRNA-binding arm"/>
    <property type="match status" value="1"/>
</dbReference>
<dbReference type="SUPFAM" id="SSF50677">
    <property type="entry name" value="ValRS/IleRS/LeuRS editing domain"/>
    <property type="match status" value="1"/>
</dbReference>
<dbReference type="PROSITE" id="PS00178">
    <property type="entry name" value="AA_TRNA_LIGASE_I"/>
    <property type="match status" value="1"/>
</dbReference>
<sequence>MTDPNQSLAKSFEPAAIEQKWSAAWEAMGISRATLEAGRPDFCIQLPPPNVTGTLHMGHAFNQTIMDGLARHARMQGANTLWVPGTDHAGIATQIVVERQLDAQGISRHDLGRPAFVDKVWEWKEQSGSTITRQIRRMGASIDWEREYFTMDPKMSRAVSDVFVRLYEQGLIYRGKRLVNWDPVLGTAVSDLEVVSEEEDGALWHIRYPLAQPDAKTGLTHLTVATTRPETMLGDVAVMVHPEDERYAHLIGQAVRLPLSGEADALDTAQWREIPIIGDEYVDRAFGTGVVKVTPGHDFNDYAVGQRHGLPQISVLTLEAKIADTAPATYRGIDRFEARKRIVVDLETLGLLAEVKKHTLMVPRGDRTGVIIEPMLTDQWFVAMSKPAPEGTRFPGRSIAEVALDAVQGGKIKLVPEQWVNTYNQWLNNIQDWCISRQLWWGHQIPAWYDEAGNVYVARTEEEARAQAAAKGHTGAIKRDDDVLDTWFSAALVPFSSLGWPADTPELKHFLPSTVLVTGYDIIFFWVARMVMMTLHFTGEVPFQTVYVHGLVRDSEGKKMSKSEGNTLDPVDLIDGIALEPLLVKRTTGLRRPKDAPNVEKRTRKEFPDGIPAFGADALRFTFASLATLGRNINFDSSRCEGYRNFCNKLWNATRFVLMNTEGQDCGLQECVGDCGPEGALHFSPADRWIVSLLQRVETEVEKGFADYRFDNIASAIYKFVWDEYCDWYLELAKVQIQTGTPAQQRATRRTLLRVLETVLRLAHPIIPFITEELWQKVAPMAGRAKGDGTESLAQQEYPRAVLAKIDEQAEQWVQQLKALVDACRNLRGEMSLSPAQRVPLYAHGDAEFLQAAAPYVQALGKLSEVKVYTDAAAMEQDGAGAPVAIVGENKLLLKIEIDVAAEHARLSKEIDRLRGEIVKCEGKLGNESFVARAPAAVVEQEQKRLADFKATLGKLEAQIARLPVQTA</sequence>
<gene>
    <name evidence="1" type="primary">valS</name>
    <name type="ordered locus">RSc2236</name>
    <name type="ORF">RS01363</name>
</gene>
<comment type="function">
    <text evidence="1">Catalyzes the attachment of valine to tRNA(Val). As ValRS can inadvertently accommodate and process structurally similar amino acids such as threonine, to avoid such errors, it has a 'posttransfer' editing activity that hydrolyzes mischarged Thr-tRNA(Val) in a tRNA-dependent manner.</text>
</comment>
<comment type="catalytic activity">
    <reaction evidence="1">
        <text>tRNA(Val) + L-valine + ATP = L-valyl-tRNA(Val) + AMP + diphosphate</text>
        <dbReference type="Rhea" id="RHEA:10704"/>
        <dbReference type="Rhea" id="RHEA-COMP:9672"/>
        <dbReference type="Rhea" id="RHEA-COMP:9708"/>
        <dbReference type="ChEBI" id="CHEBI:30616"/>
        <dbReference type="ChEBI" id="CHEBI:33019"/>
        <dbReference type="ChEBI" id="CHEBI:57762"/>
        <dbReference type="ChEBI" id="CHEBI:78442"/>
        <dbReference type="ChEBI" id="CHEBI:78537"/>
        <dbReference type="ChEBI" id="CHEBI:456215"/>
        <dbReference type="EC" id="6.1.1.9"/>
    </reaction>
</comment>
<comment type="subunit">
    <text evidence="1">Monomer.</text>
</comment>
<comment type="subcellular location">
    <subcellularLocation>
        <location evidence="1">Cytoplasm</location>
    </subcellularLocation>
</comment>
<comment type="domain">
    <text evidence="1">ValRS has two distinct active sites: one for aminoacylation and one for editing. The misactivated threonine is translocated from the active site to the editing site.</text>
</comment>
<comment type="domain">
    <text evidence="1">The C-terminal coiled-coil domain is crucial for aminoacylation activity.</text>
</comment>
<comment type="similarity">
    <text evidence="1">Belongs to the class-I aminoacyl-tRNA synthetase family. ValS type 1 subfamily.</text>
</comment>
<feature type="chain" id="PRO_0000224543" description="Valine--tRNA ligase">
    <location>
        <begin position="1"/>
        <end position="968"/>
    </location>
</feature>
<feature type="coiled-coil region" evidence="1">
    <location>
        <begin position="800"/>
        <end position="831"/>
    </location>
</feature>
<feature type="coiled-coil region" evidence="1">
    <location>
        <begin position="898"/>
        <end position="963"/>
    </location>
</feature>
<feature type="short sequence motif" description="'HIGH' region">
    <location>
        <begin position="49"/>
        <end position="59"/>
    </location>
</feature>
<feature type="short sequence motif" description="'KMSKS' region">
    <location>
        <begin position="559"/>
        <end position="563"/>
    </location>
</feature>
<feature type="binding site" evidence="1">
    <location>
        <position position="562"/>
    </location>
    <ligand>
        <name>ATP</name>
        <dbReference type="ChEBI" id="CHEBI:30616"/>
    </ligand>
</feature>
<organism>
    <name type="scientific">Ralstonia nicotianae (strain ATCC BAA-1114 / GMI1000)</name>
    <name type="common">Ralstonia solanacearum</name>
    <dbReference type="NCBI Taxonomy" id="267608"/>
    <lineage>
        <taxon>Bacteria</taxon>
        <taxon>Pseudomonadati</taxon>
        <taxon>Pseudomonadota</taxon>
        <taxon>Betaproteobacteria</taxon>
        <taxon>Burkholderiales</taxon>
        <taxon>Burkholderiaceae</taxon>
        <taxon>Ralstonia</taxon>
        <taxon>Ralstonia solanacearum species complex</taxon>
    </lineage>
</organism>